<feature type="chain" id="PRO_1000059494" description="Cysteine desulfurase IscS">
    <location>
        <begin position="1"/>
        <end position="404"/>
    </location>
</feature>
<feature type="active site" description="Cysteine persulfide intermediate" evidence="1">
    <location>
        <position position="328"/>
    </location>
</feature>
<feature type="binding site" evidence="1">
    <location>
        <begin position="75"/>
        <end position="76"/>
    </location>
    <ligand>
        <name>pyridoxal 5'-phosphate</name>
        <dbReference type="ChEBI" id="CHEBI:597326"/>
    </ligand>
</feature>
<feature type="binding site" evidence="1">
    <location>
        <position position="155"/>
    </location>
    <ligand>
        <name>pyridoxal 5'-phosphate</name>
        <dbReference type="ChEBI" id="CHEBI:597326"/>
    </ligand>
</feature>
<feature type="binding site" evidence="1">
    <location>
        <position position="183"/>
    </location>
    <ligand>
        <name>pyridoxal 5'-phosphate</name>
        <dbReference type="ChEBI" id="CHEBI:597326"/>
    </ligand>
</feature>
<feature type="binding site" evidence="1">
    <location>
        <begin position="203"/>
        <end position="205"/>
    </location>
    <ligand>
        <name>pyridoxal 5'-phosphate</name>
        <dbReference type="ChEBI" id="CHEBI:597326"/>
    </ligand>
</feature>
<feature type="binding site" evidence="1">
    <location>
        <position position="243"/>
    </location>
    <ligand>
        <name>pyridoxal 5'-phosphate</name>
        <dbReference type="ChEBI" id="CHEBI:597326"/>
    </ligand>
</feature>
<feature type="binding site" description="via persulfide group" evidence="1">
    <location>
        <position position="328"/>
    </location>
    <ligand>
        <name>[2Fe-2S] cluster</name>
        <dbReference type="ChEBI" id="CHEBI:190135"/>
        <note>ligand shared with IscU</note>
    </ligand>
</feature>
<feature type="modified residue" description="N6-(pyridoxal phosphate)lysine" evidence="1">
    <location>
        <position position="206"/>
    </location>
</feature>
<protein>
    <recommendedName>
        <fullName evidence="1">Cysteine desulfurase IscS</fullName>
        <ecNumber evidence="1">2.8.1.7</ecNumber>
    </recommendedName>
</protein>
<dbReference type="EC" id="2.8.1.7" evidence="1"/>
<dbReference type="EMBL" id="CP000826">
    <property type="protein sequence ID" value="ABV42723.1"/>
    <property type="molecule type" value="Genomic_DNA"/>
</dbReference>
<dbReference type="SMR" id="A8GHY3"/>
<dbReference type="STRING" id="399741.Spro_3627"/>
<dbReference type="KEGG" id="spe:Spro_3627"/>
<dbReference type="eggNOG" id="COG1104">
    <property type="taxonomic scope" value="Bacteria"/>
</dbReference>
<dbReference type="HOGENOM" id="CLU_003433_0_2_6"/>
<dbReference type="OrthoDB" id="9808002at2"/>
<dbReference type="UniPathway" id="UPA00266"/>
<dbReference type="GO" id="GO:1990221">
    <property type="term" value="C:L-cysteine desulfurase complex"/>
    <property type="evidence" value="ECO:0007669"/>
    <property type="project" value="UniProtKB-ARBA"/>
</dbReference>
<dbReference type="GO" id="GO:0051537">
    <property type="term" value="F:2 iron, 2 sulfur cluster binding"/>
    <property type="evidence" value="ECO:0007669"/>
    <property type="project" value="UniProtKB-UniRule"/>
</dbReference>
<dbReference type="GO" id="GO:0031071">
    <property type="term" value="F:cysteine desulfurase activity"/>
    <property type="evidence" value="ECO:0007669"/>
    <property type="project" value="UniProtKB-UniRule"/>
</dbReference>
<dbReference type="GO" id="GO:0046872">
    <property type="term" value="F:metal ion binding"/>
    <property type="evidence" value="ECO:0007669"/>
    <property type="project" value="UniProtKB-KW"/>
</dbReference>
<dbReference type="GO" id="GO:0030170">
    <property type="term" value="F:pyridoxal phosphate binding"/>
    <property type="evidence" value="ECO:0007669"/>
    <property type="project" value="UniProtKB-UniRule"/>
</dbReference>
<dbReference type="GO" id="GO:0044571">
    <property type="term" value="P:[2Fe-2S] cluster assembly"/>
    <property type="evidence" value="ECO:0007669"/>
    <property type="project" value="UniProtKB-UniRule"/>
</dbReference>
<dbReference type="FunFam" id="3.40.640.10:FF:000003">
    <property type="entry name" value="Cysteine desulfurase IscS"/>
    <property type="match status" value="1"/>
</dbReference>
<dbReference type="FunFam" id="3.90.1150.10:FF:000002">
    <property type="entry name" value="Cysteine desulfurase IscS"/>
    <property type="match status" value="1"/>
</dbReference>
<dbReference type="Gene3D" id="3.90.1150.10">
    <property type="entry name" value="Aspartate Aminotransferase, domain 1"/>
    <property type="match status" value="1"/>
</dbReference>
<dbReference type="Gene3D" id="3.40.640.10">
    <property type="entry name" value="Type I PLP-dependent aspartate aminotransferase-like (Major domain)"/>
    <property type="match status" value="1"/>
</dbReference>
<dbReference type="HAMAP" id="MF_00331">
    <property type="entry name" value="Cys_desulf_IscS"/>
    <property type="match status" value="1"/>
</dbReference>
<dbReference type="InterPro" id="IPR000192">
    <property type="entry name" value="Aminotrans_V_dom"/>
</dbReference>
<dbReference type="InterPro" id="IPR020578">
    <property type="entry name" value="Aminotrans_V_PyrdxlP_BS"/>
</dbReference>
<dbReference type="InterPro" id="IPR010240">
    <property type="entry name" value="Cys_deSase_IscS"/>
</dbReference>
<dbReference type="InterPro" id="IPR016454">
    <property type="entry name" value="Cysteine_dSase"/>
</dbReference>
<dbReference type="InterPro" id="IPR015424">
    <property type="entry name" value="PyrdxlP-dep_Trfase"/>
</dbReference>
<dbReference type="InterPro" id="IPR015421">
    <property type="entry name" value="PyrdxlP-dep_Trfase_major"/>
</dbReference>
<dbReference type="InterPro" id="IPR015422">
    <property type="entry name" value="PyrdxlP-dep_Trfase_small"/>
</dbReference>
<dbReference type="NCBIfam" id="TIGR02006">
    <property type="entry name" value="IscS"/>
    <property type="match status" value="1"/>
</dbReference>
<dbReference type="NCBIfam" id="NF002806">
    <property type="entry name" value="PRK02948.1"/>
    <property type="match status" value="1"/>
</dbReference>
<dbReference type="NCBIfam" id="NF010611">
    <property type="entry name" value="PRK14012.1"/>
    <property type="match status" value="1"/>
</dbReference>
<dbReference type="PANTHER" id="PTHR11601:SF34">
    <property type="entry name" value="CYSTEINE DESULFURASE"/>
    <property type="match status" value="1"/>
</dbReference>
<dbReference type="PANTHER" id="PTHR11601">
    <property type="entry name" value="CYSTEINE DESULFURYLASE FAMILY MEMBER"/>
    <property type="match status" value="1"/>
</dbReference>
<dbReference type="Pfam" id="PF00266">
    <property type="entry name" value="Aminotran_5"/>
    <property type="match status" value="1"/>
</dbReference>
<dbReference type="PIRSF" id="PIRSF005572">
    <property type="entry name" value="NifS"/>
    <property type="match status" value="1"/>
</dbReference>
<dbReference type="SUPFAM" id="SSF53383">
    <property type="entry name" value="PLP-dependent transferases"/>
    <property type="match status" value="1"/>
</dbReference>
<dbReference type="PROSITE" id="PS00595">
    <property type="entry name" value="AA_TRANSFER_CLASS_5"/>
    <property type="match status" value="1"/>
</dbReference>
<organism>
    <name type="scientific">Serratia proteamaculans (strain 568)</name>
    <dbReference type="NCBI Taxonomy" id="399741"/>
    <lineage>
        <taxon>Bacteria</taxon>
        <taxon>Pseudomonadati</taxon>
        <taxon>Pseudomonadota</taxon>
        <taxon>Gammaproteobacteria</taxon>
        <taxon>Enterobacterales</taxon>
        <taxon>Yersiniaceae</taxon>
        <taxon>Serratia</taxon>
    </lineage>
</organism>
<keyword id="KW-0001">2Fe-2S</keyword>
<keyword id="KW-0963">Cytoplasm</keyword>
<keyword id="KW-0408">Iron</keyword>
<keyword id="KW-0411">Iron-sulfur</keyword>
<keyword id="KW-0479">Metal-binding</keyword>
<keyword id="KW-0663">Pyridoxal phosphate</keyword>
<keyword id="KW-0808">Transferase</keyword>
<evidence type="ECO:0000255" key="1">
    <source>
        <dbReference type="HAMAP-Rule" id="MF_00331"/>
    </source>
</evidence>
<gene>
    <name evidence="1" type="primary">iscS</name>
    <name type="ordered locus">Spro_3627</name>
</gene>
<sequence>MKLPIYLDYSATTPVDPRVAEKMMQFLTLDGTFGNPASRSHRFGWQAEEAVDIARNQIAELVGADPREIVFTSGATESDNLAIKGAANFYQKKGKHIITSKTEHKAVLDTCRQLEREGFEVTYLAPQSNGIISLQALEAAMREDTILVSIMHVNNEIGVVQDIEAIGEMCRARGIIYHVDATQSVGKLPIDLSKLKVDLMSFSGHKIYGPKGIGALYVRRKPRIRIEAQIHGGGHERGMRSGTLPVHQIAGMGEAYRIAKEEMASEMARLRTLRDRLWNGVKDMEEVYLNGSLENGVPNILNVSFNYVEGESLIMALKDLAVSSGSACTSASLEPSYVLRALGMTDELAHSSIRFSLGRFTTEEEIDYTIQLVRKSIGRLRDLSPLWDMFKQGVDINSIEWAHH</sequence>
<proteinExistence type="inferred from homology"/>
<accession>A8GHY3</accession>
<reference key="1">
    <citation type="submission" date="2007-09" db="EMBL/GenBank/DDBJ databases">
        <title>Complete sequence of chromosome of Serratia proteamaculans 568.</title>
        <authorList>
            <consortium name="US DOE Joint Genome Institute"/>
            <person name="Copeland A."/>
            <person name="Lucas S."/>
            <person name="Lapidus A."/>
            <person name="Barry K."/>
            <person name="Glavina del Rio T."/>
            <person name="Dalin E."/>
            <person name="Tice H."/>
            <person name="Pitluck S."/>
            <person name="Chain P."/>
            <person name="Malfatti S."/>
            <person name="Shin M."/>
            <person name="Vergez L."/>
            <person name="Schmutz J."/>
            <person name="Larimer F."/>
            <person name="Land M."/>
            <person name="Hauser L."/>
            <person name="Kyrpides N."/>
            <person name="Kim E."/>
            <person name="Taghavi S."/>
            <person name="Newman L."/>
            <person name="Vangronsveld J."/>
            <person name="van der Lelie D."/>
            <person name="Richardson P."/>
        </authorList>
    </citation>
    <scope>NUCLEOTIDE SEQUENCE [LARGE SCALE GENOMIC DNA]</scope>
    <source>
        <strain>568</strain>
    </source>
</reference>
<name>ISCS_SERP5</name>
<comment type="function">
    <text evidence="1">Master enzyme that delivers sulfur to a number of partners involved in Fe-S cluster assembly, tRNA modification or cofactor biosynthesis. Catalyzes the removal of elemental sulfur atoms from cysteine to produce alanine. Functions as a sulfur delivery protein for Fe-S cluster synthesis onto IscU, an Fe-S scaffold assembly protein, as well as other S acceptor proteins.</text>
</comment>
<comment type="catalytic activity">
    <reaction evidence="1">
        <text>(sulfur carrier)-H + L-cysteine = (sulfur carrier)-SH + L-alanine</text>
        <dbReference type="Rhea" id="RHEA:43892"/>
        <dbReference type="Rhea" id="RHEA-COMP:14737"/>
        <dbReference type="Rhea" id="RHEA-COMP:14739"/>
        <dbReference type="ChEBI" id="CHEBI:29917"/>
        <dbReference type="ChEBI" id="CHEBI:35235"/>
        <dbReference type="ChEBI" id="CHEBI:57972"/>
        <dbReference type="ChEBI" id="CHEBI:64428"/>
        <dbReference type="EC" id="2.8.1.7"/>
    </reaction>
</comment>
<comment type="cofactor">
    <cofactor evidence="1">
        <name>pyridoxal 5'-phosphate</name>
        <dbReference type="ChEBI" id="CHEBI:597326"/>
    </cofactor>
</comment>
<comment type="pathway">
    <text evidence="1">Cofactor biosynthesis; iron-sulfur cluster biosynthesis.</text>
</comment>
<comment type="subunit">
    <text evidence="1">Homodimer. Forms a heterotetramer with IscU, interacts with other sulfur acceptors.</text>
</comment>
<comment type="subcellular location">
    <subcellularLocation>
        <location evidence="1">Cytoplasm</location>
    </subcellularLocation>
</comment>
<comment type="similarity">
    <text evidence="1">Belongs to the class-V pyridoxal-phosphate-dependent aminotransferase family. NifS/IscS subfamily.</text>
</comment>